<sequence length="318" mass="34234">MTSKLEQLRAMTTVVADTGDIEAVTRLKPVDCTTNPTIVLKALGTDMFADAFEEAIKWGKAKGGASDAVTEAIADRLAISVGAALAKIVPGRVSTEVDADLSFDTQASLNKARAIIAQYKERGIEKDRILIKLASTWEGIRAAEVLQKEGIDCNLTLLFSKAQAIACAEAKVFLISPFVGRILDWYKKSTGENYTSETDPGVVSVRQIYNFYKVNGIETIVMGASFRNAGEIEALAGCDRLTISPALLDELDAATGDLPRVLSPEKTTPDPLVSLDEKAFRWALNEDAMATEKLSEGIRAFAKDLGTLRGMVAKKLAA</sequence>
<gene>
    <name evidence="2" type="primary">tal</name>
    <name type="ordered locus">Avi_3850</name>
</gene>
<dbReference type="EC" id="2.2.1.2" evidence="2"/>
<dbReference type="EMBL" id="CP000633">
    <property type="protein sequence ID" value="ACM37773.1"/>
    <property type="molecule type" value="Genomic_DNA"/>
</dbReference>
<dbReference type="RefSeq" id="WP_015917185.1">
    <property type="nucleotide sequence ID" value="NC_011989.1"/>
</dbReference>
<dbReference type="SMR" id="B9JST0"/>
<dbReference type="STRING" id="311402.Avi_3850"/>
<dbReference type="KEGG" id="avi:Avi_3850"/>
<dbReference type="eggNOG" id="COG0176">
    <property type="taxonomic scope" value="Bacteria"/>
</dbReference>
<dbReference type="HOGENOM" id="CLU_047470_0_1_5"/>
<dbReference type="UniPathway" id="UPA00115">
    <property type="reaction ID" value="UER00414"/>
</dbReference>
<dbReference type="Proteomes" id="UP000001596">
    <property type="component" value="Chromosome 1"/>
</dbReference>
<dbReference type="GO" id="GO:0005829">
    <property type="term" value="C:cytosol"/>
    <property type="evidence" value="ECO:0007669"/>
    <property type="project" value="TreeGrafter"/>
</dbReference>
<dbReference type="GO" id="GO:0004801">
    <property type="term" value="F:transaldolase activity"/>
    <property type="evidence" value="ECO:0000250"/>
    <property type="project" value="UniProtKB"/>
</dbReference>
<dbReference type="GO" id="GO:0005975">
    <property type="term" value="P:carbohydrate metabolic process"/>
    <property type="evidence" value="ECO:0007669"/>
    <property type="project" value="InterPro"/>
</dbReference>
<dbReference type="GO" id="GO:0006098">
    <property type="term" value="P:pentose-phosphate shunt"/>
    <property type="evidence" value="ECO:0007669"/>
    <property type="project" value="UniProtKB-UniRule"/>
</dbReference>
<dbReference type="CDD" id="cd00957">
    <property type="entry name" value="Transaldolase_TalAB"/>
    <property type="match status" value="1"/>
</dbReference>
<dbReference type="FunFam" id="3.20.20.70:FF:000131">
    <property type="entry name" value="Transaldolase"/>
    <property type="match status" value="1"/>
</dbReference>
<dbReference type="Gene3D" id="3.20.20.70">
    <property type="entry name" value="Aldolase class I"/>
    <property type="match status" value="1"/>
</dbReference>
<dbReference type="HAMAP" id="MF_00492">
    <property type="entry name" value="Transaldolase_1"/>
    <property type="match status" value="1"/>
</dbReference>
<dbReference type="InterPro" id="IPR013785">
    <property type="entry name" value="Aldolase_TIM"/>
</dbReference>
<dbReference type="InterPro" id="IPR001585">
    <property type="entry name" value="TAL/FSA"/>
</dbReference>
<dbReference type="InterPro" id="IPR004730">
    <property type="entry name" value="Transaldolase_1"/>
</dbReference>
<dbReference type="InterPro" id="IPR018225">
    <property type="entry name" value="Transaldolase_AS"/>
</dbReference>
<dbReference type="NCBIfam" id="TIGR00874">
    <property type="entry name" value="talAB"/>
    <property type="match status" value="1"/>
</dbReference>
<dbReference type="PANTHER" id="PTHR10683">
    <property type="entry name" value="TRANSALDOLASE"/>
    <property type="match status" value="1"/>
</dbReference>
<dbReference type="PANTHER" id="PTHR10683:SF18">
    <property type="entry name" value="TRANSALDOLASE"/>
    <property type="match status" value="1"/>
</dbReference>
<dbReference type="Pfam" id="PF00923">
    <property type="entry name" value="TAL_FSA"/>
    <property type="match status" value="1"/>
</dbReference>
<dbReference type="SUPFAM" id="SSF51569">
    <property type="entry name" value="Aldolase"/>
    <property type="match status" value="1"/>
</dbReference>
<dbReference type="PROSITE" id="PS01054">
    <property type="entry name" value="TRANSALDOLASE_1"/>
    <property type="match status" value="1"/>
</dbReference>
<dbReference type="PROSITE" id="PS00958">
    <property type="entry name" value="TRANSALDOLASE_2"/>
    <property type="match status" value="1"/>
</dbReference>
<organism>
    <name type="scientific">Allorhizobium ampelinum (strain ATCC BAA-846 / DSM 112012 / S4)</name>
    <name type="common">Agrobacterium vitis (strain S4)</name>
    <dbReference type="NCBI Taxonomy" id="311402"/>
    <lineage>
        <taxon>Bacteria</taxon>
        <taxon>Pseudomonadati</taxon>
        <taxon>Pseudomonadota</taxon>
        <taxon>Alphaproteobacteria</taxon>
        <taxon>Hyphomicrobiales</taxon>
        <taxon>Rhizobiaceae</taxon>
        <taxon>Rhizobium/Agrobacterium group</taxon>
        <taxon>Allorhizobium</taxon>
        <taxon>Allorhizobium ampelinum</taxon>
    </lineage>
</organism>
<comment type="function">
    <text evidence="2">Transaldolase is important for the balance of metabolites in the pentose-phosphate pathway.</text>
</comment>
<comment type="catalytic activity">
    <reaction evidence="2">
        <text>D-sedoheptulose 7-phosphate + D-glyceraldehyde 3-phosphate = D-erythrose 4-phosphate + beta-D-fructose 6-phosphate</text>
        <dbReference type="Rhea" id="RHEA:17053"/>
        <dbReference type="ChEBI" id="CHEBI:16897"/>
        <dbReference type="ChEBI" id="CHEBI:57483"/>
        <dbReference type="ChEBI" id="CHEBI:57634"/>
        <dbReference type="ChEBI" id="CHEBI:59776"/>
        <dbReference type="EC" id="2.2.1.2"/>
    </reaction>
</comment>
<comment type="pathway">
    <text evidence="2">Carbohydrate degradation; pentose phosphate pathway; D-glyceraldehyde 3-phosphate and beta-D-fructose 6-phosphate from D-ribose 5-phosphate and D-xylulose 5-phosphate (non-oxidative stage): step 2/3.</text>
</comment>
<comment type="subunit">
    <text evidence="1">Homodimer.</text>
</comment>
<comment type="subcellular location">
    <subcellularLocation>
        <location evidence="2">Cytoplasm</location>
    </subcellularLocation>
</comment>
<comment type="similarity">
    <text evidence="2">Belongs to the transaldolase family. Type 1 subfamily.</text>
</comment>
<proteinExistence type="inferred from homology"/>
<accession>B9JST0</accession>
<evidence type="ECO:0000250" key="1"/>
<evidence type="ECO:0000255" key="2">
    <source>
        <dbReference type="HAMAP-Rule" id="MF_00492"/>
    </source>
</evidence>
<reference key="1">
    <citation type="journal article" date="2009" name="J. Bacteriol.">
        <title>Genome sequences of three Agrobacterium biovars help elucidate the evolution of multichromosome genomes in bacteria.</title>
        <authorList>
            <person name="Slater S.C."/>
            <person name="Goldman B.S."/>
            <person name="Goodner B."/>
            <person name="Setubal J.C."/>
            <person name="Farrand S.K."/>
            <person name="Nester E.W."/>
            <person name="Burr T.J."/>
            <person name="Banta L."/>
            <person name="Dickerman A.W."/>
            <person name="Paulsen I."/>
            <person name="Otten L."/>
            <person name="Suen G."/>
            <person name="Welch R."/>
            <person name="Almeida N.F."/>
            <person name="Arnold F."/>
            <person name="Burton O.T."/>
            <person name="Du Z."/>
            <person name="Ewing A."/>
            <person name="Godsy E."/>
            <person name="Heisel S."/>
            <person name="Houmiel K.L."/>
            <person name="Jhaveri J."/>
            <person name="Lu J."/>
            <person name="Miller N.M."/>
            <person name="Norton S."/>
            <person name="Chen Q."/>
            <person name="Phoolcharoen W."/>
            <person name="Ohlin V."/>
            <person name="Ondrusek D."/>
            <person name="Pride N."/>
            <person name="Stricklin S.L."/>
            <person name="Sun J."/>
            <person name="Wheeler C."/>
            <person name="Wilson L."/>
            <person name="Zhu H."/>
            <person name="Wood D.W."/>
        </authorList>
    </citation>
    <scope>NUCLEOTIDE SEQUENCE [LARGE SCALE GENOMIC DNA]</scope>
    <source>
        <strain>ATCC BAA-846 / DSM 112012 / S4</strain>
    </source>
</reference>
<feature type="chain" id="PRO_1000198450" description="Transaldolase">
    <location>
        <begin position="1"/>
        <end position="318"/>
    </location>
</feature>
<feature type="active site" description="Schiff-base intermediate with substrate" evidence="2">
    <location>
        <position position="132"/>
    </location>
</feature>
<protein>
    <recommendedName>
        <fullName evidence="2">Transaldolase</fullName>
        <ecNumber evidence="2">2.2.1.2</ecNumber>
    </recommendedName>
</protein>
<name>TAL_ALLAM</name>
<keyword id="KW-0963">Cytoplasm</keyword>
<keyword id="KW-0570">Pentose shunt</keyword>
<keyword id="KW-1185">Reference proteome</keyword>
<keyword id="KW-0704">Schiff base</keyword>
<keyword id="KW-0808">Transferase</keyword>